<proteinExistence type="inferred from homology"/>
<sequence length="148" mass="17386">MRSIMINTIQLGQRYLETYPNQKKLALFMPDYRLIRLVKQAARFMPIFACFAILWQYFFTDPTQSILANAIITSLFAISLPYQGLYWLGKRANTPLPLSLLDWYQSLKQKLISEQKIMQDQAVPSYQDFANLLKLAEETWGDNYFNEL</sequence>
<gene>
    <name type="ordered locus">HD_1715</name>
</gene>
<accession>Q7VKY8</accession>
<name>Y1715_HAEDU</name>
<protein>
    <recommendedName>
        <fullName evidence="1">UPF0208 membrane protein HD_1715</fullName>
    </recommendedName>
</protein>
<keyword id="KW-0997">Cell inner membrane</keyword>
<keyword id="KW-1003">Cell membrane</keyword>
<keyword id="KW-0472">Membrane</keyword>
<keyword id="KW-1185">Reference proteome</keyword>
<keyword id="KW-0812">Transmembrane</keyword>
<keyword id="KW-1133">Transmembrane helix</keyword>
<comment type="subcellular location">
    <subcellularLocation>
        <location evidence="1">Cell inner membrane</location>
        <topology evidence="1">Multi-pass membrane protein</topology>
    </subcellularLocation>
</comment>
<comment type="similarity">
    <text evidence="1">Belongs to the UPF0208 family.</text>
</comment>
<feature type="chain" id="PRO_0000080813" description="UPF0208 membrane protein HD_1715">
    <location>
        <begin position="1"/>
        <end position="148"/>
    </location>
</feature>
<feature type="transmembrane region" description="Helical" evidence="1">
    <location>
        <begin position="41"/>
        <end position="60"/>
    </location>
</feature>
<feature type="transmembrane region" description="Helical" evidence="1">
    <location>
        <begin position="66"/>
        <end position="88"/>
    </location>
</feature>
<organism>
    <name type="scientific">Haemophilus ducreyi (strain 35000HP / ATCC 700724)</name>
    <dbReference type="NCBI Taxonomy" id="233412"/>
    <lineage>
        <taxon>Bacteria</taxon>
        <taxon>Pseudomonadati</taxon>
        <taxon>Pseudomonadota</taxon>
        <taxon>Gammaproteobacteria</taxon>
        <taxon>Pasteurellales</taxon>
        <taxon>Pasteurellaceae</taxon>
        <taxon>Haemophilus</taxon>
    </lineage>
</organism>
<reference key="1">
    <citation type="submission" date="2003-06" db="EMBL/GenBank/DDBJ databases">
        <title>The complete genome sequence of Haemophilus ducreyi.</title>
        <authorList>
            <person name="Munson R.S. Jr."/>
            <person name="Ray W.C."/>
            <person name="Mahairas G."/>
            <person name="Sabo P."/>
            <person name="Mungur R."/>
            <person name="Johnson L."/>
            <person name="Nguyen D."/>
            <person name="Wang J."/>
            <person name="Forst C."/>
            <person name="Hood L."/>
        </authorList>
    </citation>
    <scope>NUCLEOTIDE SEQUENCE [LARGE SCALE GENOMIC DNA]</scope>
    <source>
        <strain>35000HP / ATCC 700724</strain>
    </source>
</reference>
<dbReference type="EMBL" id="AE017143">
    <property type="protein sequence ID" value="AAP96475.1"/>
    <property type="molecule type" value="Genomic_DNA"/>
</dbReference>
<dbReference type="STRING" id="233412.HD_1715"/>
<dbReference type="KEGG" id="hdu:HD_1715"/>
<dbReference type="eggNOG" id="COG3092">
    <property type="taxonomic scope" value="Bacteria"/>
</dbReference>
<dbReference type="HOGENOM" id="CLU_128746_0_0_6"/>
<dbReference type="Proteomes" id="UP000001022">
    <property type="component" value="Chromosome"/>
</dbReference>
<dbReference type="GO" id="GO:0005886">
    <property type="term" value="C:plasma membrane"/>
    <property type="evidence" value="ECO:0007669"/>
    <property type="project" value="UniProtKB-SubCell"/>
</dbReference>
<dbReference type="HAMAP" id="MF_01101">
    <property type="entry name" value="UPF0208"/>
    <property type="match status" value="1"/>
</dbReference>
<dbReference type="InterPro" id="IPR007334">
    <property type="entry name" value="UPF0208"/>
</dbReference>
<dbReference type="NCBIfam" id="NF002493">
    <property type="entry name" value="PRK01816.1"/>
    <property type="match status" value="1"/>
</dbReference>
<dbReference type="Pfam" id="PF04217">
    <property type="entry name" value="DUF412"/>
    <property type="match status" value="1"/>
</dbReference>
<evidence type="ECO:0000255" key="1">
    <source>
        <dbReference type="HAMAP-Rule" id="MF_01101"/>
    </source>
</evidence>